<organism>
    <name type="scientific">Lonomia obliqua</name>
    <name type="common">Moth</name>
    <dbReference type="NCBI Taxonomy" id="304329"/>
    <lineage>
        <taxon>Eukaryota</taxon>
        <taxon>Metazoa</taxon>
        <taxon>Ecdysozoa</taxon>
        <taxon>Arthropoda</taxon>
        <taxon>Hexapoda</taxon>
        <taxon>Insecta</taxon>
        <taxon>Pterygota</taxon>
        <taxon>Neoptera</taxon>
        <taxon>Endopterygota</taxon>
        <taxon>Lepidoptera</taxon>
        <taxon>Glossata</taxon>
        <taxon>Ditrysia</taxon>
        <taxon>Bombycoidea</taxon>
        <taxon>Saturniidae</taxon>
        <taxon>Hemileucinae</taxon>
        <taxon>Lonomia</taxon>
    </lineage>
</organism>
<sequence length="25" mass="2851">IEHNAEEIRKTAIRTAVQNTAQQTK</sequence>
<name>UP04_LONON</name>
<reference evidence="4" key="1">
    <citation type="journal article" date="2008" name="Toxicon">
        <title>Immunochemical and proteomic technologies as tools for unravelling toxins involved in envenoming by accidental contact with Lonomia obliqua caterpillars.</title>
        <authorList>
            <person name="Ricci-Silva M.E."/>
            <person name="Valente R.H."/>
            <person name="Leon I.R."/>
            <person name="Tambourgi D.V."/>
            <person name="Ramos O.H.P."/>
            <person name="Perales J."/>
            <person name="Chudzinski-Tavassi A.M."/>
        </authorList>
    </citation>
    <scope>PROTEIN SEQUENCE</scope>
    <source>
        <tissue evidence="2">Larval bristle</tissue>
    </source>
</reference>
<feature type="chain" id="PRO_0000302103" description="Unknown protein 4">
    <location>
        <begin position="1" status="less than"/>
        <end position="25" status="greater than"/>
    </location>
</feature>
<feature type="region of interest" description="Disordered" evidence="1">
    <location>
        <begin position="1"/>
        <end position="25"/>
    </location>
</feature>
<feature type="compositionally biased region" description="Basic and acidic residues" evidence="1">
    <location>
        <begin position="1"/>
        <end position="10"/>
    </location>
</feature>
<feature type="compositionally biased region" description="Polar residues" evidence="1">
    <location>
        <begin position="16"/>
        <end position="25"/>
    </location>
</feature>
<feature type="unsure residue" description="I or L" evidence="2">
    <location>
        <position position="1"/>
    </location>
</feature>
<feature type="unsure residue" description="I or L" evidence="2">
    <location>
        <position position="8"/>
    </location>
</feature>
<feature type="unsure residue" description="I or L" evidence="2">
    <location>
        <position position="13"/>
    </location>
</feature>
<feature type="non-consecutive residues" evidence="3">
    <location>
        <begin position="10"/>
        <end position="11"/>
    </location>
</feature>
<feature type="non-consecutive residues" evidence="3">
    <location>
        <begin position="14"/>
        <end position="15"/>
    </location>
</feature>
<feature type="non-terminal residue" evidence="3">
    <location>
        <position position="1"/>
    </location>
</feature>
<feature type="non-terminal residue" evidence="3">
    <location>
        <position position="25"/>
    </location>
</feature>
<proteinExistence type="evidence at protein level"/>
<keyword id="KW-0903">Direct protein sequencing</keyword>
<accession>P85249</accession>
<evidence type="ECO:0000256" key="1">
    <source>
        <dbReference type="SAM" id="MobiDB-lite"/>
    </source>
</evidence>
<evidence type="ECO:0000269" key="2">
    <source>
    </source>
</evidence>
<evidence type="ECO:0000303" key="3">
    <source>
    </source>
</evidence>
<evidence type="ECO:0000305" key="4"/>
<protein>
    <recommendedName>
        <fullName>Unknown protein 4</fullName>
    </recommendedName>
</protein>
<comment type="caution">
    <text evidence="2">The order of the peptides shown is unknown.</text>
</comment>